<name>NOT1A_DANRE</name>
<feature type="signal peptide" evidence="3">
    <location>
        <begin position="1"/>
        <end position="26"/>
    </location>
</feature>
<feature type="chain" id="PRO_0000432991" description="Palmitoleoyl-protein carboxylesterase notum1a">
    <location>
        <begin position="27"/>
        <end position="500"/>
    </location>
</feature>
<feature type="active site" description="Charge relay system" evidence="1">
    <location>
        <position position="237"/>
    </location>
</feature>
<feature type="active site" description="Charge relay system" evidence="1">
    <location>
        <position position="344"/>
    </location>
</feature>
<feature type="active site" description="Charge relay system" evidence="1">
    <location>
        <position position="393"/>
    </location>
</feature>
<feature type="glycosylation site" description="N-linked (GlcNAc...) asparagine" evidence="4">
    <location>
        <position position="101"/>
    </location>
</feature>
<evidence type="ECO:0000250" key="1">
    <source>
        <dbReference type="UniProtKB" id="Q6P988"/>
    </source>
</evidence>
<evidence type="ECO:0000250" key="2">
    <source>
        <dbReference type="UniProtKB" id="Q9VUX3"/>
    </source>
</evidence>
<evidence type="ECO:0000255" key="3"/>
<evidence type="ECO:0000255" key="4">
    <source>
        <dbReference type="PROSITE-ProRule" id="PRU00498"/>
    </source>
</evidence>
<evidence type="ECO:0000269" key="5">
    <source>
    </source>
</evidence>
<evidence type="ECO:0000305" key="6"/>
<evidence type="ECO:0000312" key="7">
    <source>
        <dbReference type="ZFIN" id="ZDB-GENE-120807-2"/>
    </source>
</evidence>
<comment type="function">
    <text evidence="1 5">Carboxylesterase that acts as a key negative regulator of the Wnt signaling pathway (PubMed:22669824). Acts by specifically mediating depalmitoleoylation of WNT proteins. Serine palmitoleoylation of WNT proteins is required for efficient binding to frizzled receptors (By similarity).</text>
</comment>
<comment type="catalytic activity">
    <reaction evidence="1">
        <text>[Wnt protein]-O-(9Z)-hexadecenoyl-L-serine + H2O = [Wnt protein]-L-serine + (9Z)-hexadecenoate + H(+)</text>
        <dbReference type="Rhea" id="RHEA:45340"/>
        <dbReference type="Rhea" id="RHEA-COMP:11170"/>
        <dbReference type="Rhea" id="RHEA-COMP:11171"/>
        <dbReference type="ChEBI" id="CHEBI:15377"/>
        <dbReference type="ChEBI" id="CHEBI:15378"/>
        <dbReference type="ChEBI" id="CHEBI:29999"/>
        <dbReference type="ChEBI" id="CHEBI:32372"/>
        <dbReference type="ChEBI" id="CHEBI:85189"/>
        <dbReference type="EC" id="3.1.1.98"/>
    </reaction>
</comment>
<comment type="subcellular location">
    <subcellularLocation>
        <location evidence="2">Secreted</location>
    </subcellularLocation>
</comment>
<comment type="developmental stage">
    <text evidence="5">First appears around the blastoderm margin prior to the onset of gastrulation. In later gastrulation, expressed in the lateral edges and midline of the posterior neural plate. During segmentation, expressed in stripes at the lateral edges and adjacent to the midline of the neural plate, throughout the hindbrain, with strong expression in rhombomeres 3 and 5, and at the midbrain-hindbrain boundary. At 24 hours post-fertilization (hpf), highly expressed in the central nervous system, including the dorsal neural tube and the midbrain-hindbrain boundary.</text>
</comment>
<comment type="similarity">
    <text evidence="6">Belongs to the pectinacetylesterase family. Notum subfamily.</text>
</comment>
<comment type="caution">
    <text evidence="5 6">The molecular function of NOTUM family protein has remained unclear for many years. It was initially thought to hydrolyze glycosaminoglycan (GAG) chains of glypicans, thereby affecting glypicans ability to interact with Wnt ligands. It was later reported to trigger glypican shedding, by mediating cleavage of their GPI-anchor (PubMed:22669824). It was finally shown that it requires glypicans to suppress Wnt signaling, but does not cleave their GPI-anchor. It acts by mediating depalmitoleoylation of WNT proteins, impairing WNT binding to frizzled receptors.</text>
</comment>
<proteinExistence type="evidence at transcript level"/>
<organism>
    <name type="scientific">Danio rerio</name>
    <name type="common">Zebrafish</name>
    <name type="synonym">Brachydanio rerio</name>
    <dbReference type="NCBI Taxonomy" id="7955"/>
    <lineage>
        <taxon>Eukaryota</taxon>
        <taxon>Metazoa</taxon>
        <taxon>Chordata</taxon>
        <taxon>Craniata</taxon>
        <taxon>Vertebrata</taxon>
        <taxon>Euteleostomi</taxon>
        <taxon>Actinopterygii</taxon>
        <taxon>Neopterygii</taxon>
        <taxon>Teleostei</taxon>
        <taxon>Ostariophysi</taxon>
        <taxon>Cypriniformes</taxon>
        <taxon>Danionidae</taxon>
        <taxon>Danioninae</taxon>
        <taxon>Danio</taxon>
    </lineage>
</organism>
<accession>C5H5C4</accession>
<dbReference type="EC" id="3.1.1.98" evidence="1"/>
<dbReference type="EMBL" id="EU728672">
    <property type="protein sequence ID" value="ACH92954.1"/>
    <property type="molecule type" value="mRNA"/>
</dbReference>
<dbReference type="EMBL" id="AL954343">
    <property type="status" value="NOT_ANNOTATED_CDS"/>
    <property type="molecule type" value="Genomic_DNA"/>
</dbReference>
<dbReference type="RefSeq" id="NP_001155126.1">
    <property type="nucleotide sequence ID" value="NM_001161654.1"/>
</dbReference>
<dbReference type="SMR" id="C5H5C4"/>
<dbReference type="FunCoup" id="C5H5C4">
    <property type="interactions" value="680"/>
</dbReference>
<dbReference type="STRING" id="7955.ENSDARP00000047417"/>
<dbReference type="ESTHER" id="danre-c5h5c4">
    <property type="family name" value="Pectinacetylesterase-Notum"/>
</dbReference>
<dbReference type="GlyCosmos" id="C5H5C4">
    <property type="glycosylation" value="1 site, No reported glycans"/>
</dbReference>
<dbReference type="PaxDb" id="7955-ENSDARP00000047417"/>
<dbReference type="Ensembl" id="ENSDART00000047418">
    <property type="protein sequence ID" value="ENSDARP00000047417"/>
    <property type="gene ID" value="ENSDARG00000031126"/>
</dbReference>
<dbReference type="GeneID" id="570510"/>
<dbReference type="KEGG" id="dre:570510"/>
<dbReference type="AGR" id="ZFIN:ZDB-GENE-120807-2"/>
<dbReference type="CTD" id="570510"/>
<dbReference type="ZFIN" id="ZDB-GENE-120807-2">
    <property type="gene designation" value="notum1a"/>
</dbReference>
<dbReference type="eggNOG" id="KOG4287">
    <property type="taxonomic scope" value="Eukaryota"/>
</dbReference>
<dbReference type="HOGENOM" id="CLU_026533_1_1_1"/>
<dbReference type="InParanoid" id="C5H5C4"/>
<dbReference type="OMA" id="SKRDWVN"/>
<dbReference type="OrthoDB" id="2015280at2759"/>
<dbReference type="PhylomeDB" id="C5H5C4"/>
<dbReference type="TreeFam" id="TF324830"/>
<dbReference type="BRENDA" id="3.1.1.98">
    <property type="organism ID" value="928"/>
</dbReference>
<dbReference type="Reactome" id="R-DRE-5362798">
    <property type="pathway name" value="Release of Hh-Np from the secreting cell"/>
</dbReference>
<dbReference type="PRO" id="PR:C5H5C4"/>
<dbReference type="Proteomes" id="UP000000437">
    <property type="component" value="Chromosome 3"/>
</dbReference>
<dbReference type="Bgee" id="ENSDARG00000031126">
    <property type="expression patterns" value="Expressed in gastrula and 19 other cell types or tissues"/>
</dbReference>
<dbReference type="GO" id="GO:0005576">
    <property type="term" value="C:extracellular region"/>
    <property type="evidence" value="ECO:0007669"/>
    <property type="project" value="UniProtKB-SubCell"/>
</dbReference>
<dbReference type="GO" id="GO:0004621">
    <property type="term" value="F:glycosylphosphatidylinositol phospholipase D activity"/>
    <property type="evidence" value="ECO:0000314"/>
    <property type="project" value="ZFIN"/>
</dbReference>
<dbReference type="GO" id="GO:1990699">
    <property type="term" value="F:palmitoleyl hydrolase activity"/>
    <property type="evidence" value="ECO:0000250"/>
    <property type="project" value="UniProtKB"/>
</dbReference>
<dbReference type="GO" id="GO:0009952">
    <property type="term" value="P:anterior/posterior pattern specification"/>
    <property type="evidence" value="ECO:0000315"/>
    <property type="project" value="ZFIN"/>
</dbReference>
<dbReference type="GO" id="GO:0090090">
    <property type="term" value="P:negative regulation of canonical Wnt signaling pathway"/>
    <property type="evidence" value="ECO:0000314"/>
    <property type="project" value="ZFIN"/>
</dbReference>
<dbReference type="GO" id="GO:0030178">
    <property type="term" value="P:negative regulation of Wnt signaling pathway"/>
    <property type="evidence" value="ECO:0000250"/>
    <property type="project" value="UniProtKB"/>
</dbReference>
<dbReference type="GO" id="GO:0021532">
    <property type="term" value="P:neural tube patterning"/>
    <property type="evidence" value="ECO:0000315"/>
    <property type="project" value="ZFIN"/>
</dbReference>
<dbReference type="GO" id="GO:1990697">
    <property type="term" value="P:protein depalmitoleylation"/>
    <property type="evidence" value="ECO:0000250"/>
    <property type="project" value="UniProtKB"/>
</dbReference>
<dbReference type="GO" id="GO:0016055">
    <property type="term" value="P:Wnt signaling pathway"/>
    <property type="evidence" value="ECO:0007669"/>
    <property type="project" value="UniProtKB-KW"/>
</dbReference>
<dbReference type="InterPro" id="IPR004963">
    <property type="entry name" value="PAE/NOTUM"/>
</dbReference>
<dbReference type="PANTHER" id="PTHR21562">
    <property type="entry name" value="NOTUM-RELATED"/>
    <property type="match status" value="1"/>
</dbReference>
<dbReference type="PANTHER" id="PTHR21562:SF7">
    <property type="entry name" value="PALMITOLEOYL-PROTEIN CARBOXYLESTERASE NOTUM"/>
    <property type="match status" value="1"/>
</dbReference>
<dbReference type="Pfam" id="PF03283">
    <property type="entry name" value="PAE"/>
    <property type="match status" value="1"/>
</dbReference>
<protein>
    <recommendedName>
        <fullName evidence="1">Palmitoleoyl-protein carboxylesterase notum1a</fullName>
        <ecNumber evidence="1">3.1.1.98</ecNumber>
    </recommendedName>
</protein>
<keyword id="KW-0325">Glycoprotein</keyword>
<keyword id="KW-0378">Hydrolase</keyword>
<keyword id="KW-1185">Reference proteome</keyword>
<keyword id="KW-0964">Secreted</keyword>
<keyword id="KW-0719">Serine esterase</keyword>
<keyword id="KW-0732">Signal</keyword>
<keyword id="KW-0879">Wnt signaling pathway</keyword>
<gene>
    <name evidence="7" type="primary">notum1a</name>
</gene>
<sequence length="500" mass="56715">MKRSLWVMQVLHWAVMLALVQCGALGARRFRGGRNPQPRRALPSAHYRDRGETTESFSLDFTAVEENMDNFMTQVKNLAQSLYPCSAQKLDYDMKLHFLENTSVTCNDGTPAGYYLKESKGSKRWLIFLEGGWYCFNKENCDSRYETMRRLMSSSKWPQTKTGTGMLSSLPEENPHWWNANMVFIPYCSSDVWSGASPKTDQNDYAFMGSLIIKEVVKDLLSKGLDNAKILLLAGSSAGGTGVLLNVDSVSELLEELGHTNIQVRGLSDSGWFLDNKQYRCTDCVDTINCAPTEVIKRGIKYWGGVVPERCRQAYEGKEWNCFFGYKVYPTIKRPVFIVQWLFDEAQLTVDNIHLTGQPVQEGQWRYIQNLGTELRNTLKDVPAMFAPACLSHEFITRNYWTDVQVKGTSLPRALHCWDRSLQDTSRNNKSPPKGCPVHLIDSCPWPHCNPTCPTIRDQSTGQEMNVIQFLMHMGFDVQKMAHQQGMDPSKLLGMLSSGS</sequence>
<reference key="1">
    <citation type="journal article" date="2012" name="Development">
        <title>A zebrafish Notum homolog specifically blocks the Wnt/?-catenin signaling pathway.</title>
        <authorList>
            <person name="Flowers G.P."/>
            <person name="Topczewska J.M."/>
            <person name="Topczewski J."/>
        </authorList>
    </citation>
    <scope>NUCLEOTIDE SEQUENCE [MRNA]</scope>
    <scope>FUNCTION</scope>
    <scope>DEVELOPMENTAL STAGE</scope>
</reference>
<reference key="2">
    <citation type="journal article" date="2013" name="Nature">
        <title>The zebrafish reference genome sequence and its relationship to the human genome.</title>
        <authorList>
            <person name="Howe K."/>
            <person name="Clark M.D."/>
            <person name="Torroja C.F."/>
            <person name="Torrance J."/>
            <person name="Berthelot C."/>
            <person name="Muffato M."/>
            <person name="Collins J.E."/>
            <person name="Humphray S."/>
            <person name="McLaren K."/>
            <person name="Matthews L."/>
            <person name="McLaren S."/>
            <person name="Sealy I."/>
            <person name="Caccamo M."/>
            <person name="Churcher C."/>
            <person name="Scott C."/>
            <person name="Barrett J.C."/>
            <person name="Koch R."/>
            <person name="Rauch G.J."/>
            <person name="White S."/>
            <person name="Chow W."/>
            <person name="Kilian B."/>
            <person name="Quintais L.T."/>
            <person name="Guerra-Assuncao J.A."/>
            <person name="Zhou Y."/>
            <person name="Gu Y."/>
            <person name="Yen J."/>
            <person name="Vogel J.H."/>
            <person name="Eyre T."/>
            <person name="Redmond S."/>
            <person name="Banerjee R."/>
            <person name="Chi J."/>
            <person name="Fu B."/>
            <person name="Langley E."/>
            <person name="Maguire S.F."/>
            <person name="Laird G.K."/>
            <person name="Lloyd D."/>
            <person name="Kenyon E."/>
            <person name="Donaldson S."/>
            <person name="Sehra H."/>
            <person name="Almeida-King J."/>
            <person name="Loveland J."/>
            <person name="Trevanion S."/>
            <person name="Jones M."/>
            <person name="Quail M."/>
            <person name="Willey D."/>
            <person name="Hunt A."/>
            <person name="Burton J."/>
            <person name="Sims S."/>
            <person name="McLay K."/>
            <person name="Plumb B."/>
            <person name="Davis J."/>
            <person name="Clee C."/>
            <person name="Oliver K."/>
            <person name="Clark R."/>
            <person name="Riddle C."/>
            <person name="Elliot D."/>
            <person name="Threadgold G."/>
            <person name="Harden G."/>
            <person name="Ware D."/>
            <person name="Begum S."/>
            <person name="Mortimore B."/>
            <person name="Kerry G."/>
            <person name="Heath P."/>
            <person name="Phillimore B."/>
            <person name="Tracey A."/>
            <person name="Corby N."/>
            <person name="Dunn M."/>
            <person name="Johnson C."/>
            <person name="Wood J."/>
            <person name="Clark S."/>
            <person name="Pelan S."/>
            <person name="Griffiths G."/>
            <person name="Smith M."/>
            <person name="Glithero R."/>
            <person name="Howden P."/>
            <person name="Barker N."/>
            <person name="Lloyd C."/>
            <person name="Stevens C."/>
            <person name="Harley J."/>
            <person name="Holt K."/>
            <person name="Panagiotidis G."/>
            <person name="Lovell J."/>
            <person name="Beasley H."/>
            <person name="Henderson C."/>
            <person name="Gordon D."/>
            <person name="Auger K."/>
            <person name="Wright D."/>
            <person name="Collins J."/>
            <person name="Raisen C."/>
            <person name="Dyer L."/>
            <person name="Leung K."/>
            <person name="Robertson L."/>
            <person name="Ambridge K."/>
            <person name="Leongamornlert D."/>
            <person name="McGuire S."/>
            <person name="Gilderthorp R."/>
            <person name="Griffiths C."/>
            <person name="Manthravadi D."/>
            <person name="Nichol S."/>
            <person name="Barker G."/>
            <person name="Whitehead S."/>
            <person name="Kay M."/>
            <person name="Brown J."/>
            <person name="Murnane C."/>
            <person name="Gray E."/>
            <person name="Humphries M."/>
            <person name="Sycamore N."/>
            <person name="Barker D."/>
            <person name="Saunders D."/>
            <person name="Wallis J."/>
            <person name="Babbage A."/>
            <person name="Hammond S."/>
            <person name="Mashreghi-Mohammadi M."/>
            <person name="Barr L."/>
            <person name="Martin S."/>
            <person name="Wray P."/>
            <person name="Ellington A."/>
            <person name="Matthews N."/>
            <person name="Ellwood M."/>
            <person name="Woodmansey R."/>
            <person name="Clark G."/>
            <person name="Cooper J."/>
            <person name="Tromans A."/>
            <person name="Grafham D."/>
            <person name="Skuce C."/>
            <person name="Pandian R."/>
            <person name="Andrews R."/>
            <person name="Harrison E."/>
            <person name="Kimberley A."/>
            <person name="Garnett J."/>
            <person name="Fosker N."/>
            <person name="Hall R."/>
            <person name="Garner P."/>
            <person name="Kelly D."/>
            <person name="Bird C."/>
            <person name="Palmer S."/>
            <person name="Gehring I."/>
            <person name="Berger A."/>
            <person name="Dooley C.M."/>
            <person name="Ersan-Urun Z."/>
            <person name="Eser C."/>
            <person name="Geiger H."/>
            <person name="Geisler M."/>
            <person name="Karotki L."/>
            <person name="Kirn A."/>
            <person name="Konantz J."/>
            <person name="Konantz M."/>
            <person name="Oberlander M."/>
            <person name="Rudolph-Geiger S."/>
            <person name="Teucke M."/>
            <person name="Lanz C."/>
            <person name="Raddatz G."/>
            <person name="Osoegawa K."/>
            <person name="Zhu B."/>
            <person name="Rapp A."/>
            <person name="Widaa S."/>
            <person name="Langford C."/>
            <person name="Yang F."/>
            <person name="Schuster S.C."/>
            <person name="Carter N.P."/>
            <person name="Harrow J."/>
            <person name="Ning Z."/>
            <person name="Herrero J."/>
            <person name="Searle S.M."/>
            <person name="Enright A."/>
            <person name="Geisler R."/>
            <person name="Plasterk R.H."/>
            <person name="Lee C."/>
            <person name="Westerfield M."/>
            <person name="de Jong P.J."/>
            <person name="Zon L.I."/>
            <person name="Postlethwait J.H."/>
            <person name="Nusslein-Volhard C."/>
            <person name="Hubbard T.J."/>
            <person name="Roest Crollius H."/>
            <person name="Rogers J."/>
            <person name="Stemple D.L."/>
        </authorList>
    </citation>
    <scope>NUCLEOTIDE SEQUENCE [LARGE SCALE GENOMIC DNA]</scope>
    <source>
        <strain>Tuebingen</strain>
    </source>
</reference>